<protein>
    <recommendedName>
        <fullName evidence="1">DNA-directed RNA polymerase subunit beta'</fullName>
        <shortName evidence="1">RNAP subunit beta'</shortName>
        <ecNumber evidence="1">2.7.7.6</ecNumber>
    </recommendedName>
    <alternativeName>
        <fullName evidence="1">RNA polymerase subunit beta'</fullName>
    </alternativeName>
    <alternativeName>
        <fullName evidence="1">Transcriptase subunit beta'</fullName>
    </alternativeName>
</protein>
<name>RPOC_CAMJJ</name>
<sequence>MSKFKVIEIKEDARPRDFEAFQLRLASPEKIKSWSYGEVKKPETINYRTLKPERDGLFCAKIFGPIRDYECLCGKYKKMRFKGVKCEKCGVEVANSKVRRSRMGHIELVTPVAHIWYVNSLPSRIGTLLGVKMKDLERVLYYEAYIVENPGDAFYDNESTKKVEYCDVLNEEQYQNLMQRYENSGFKARMGGEVVRDLLANLDLVALLNQLKEEMAATNSEAKKKTIIKRLKVVENFLNSNLNANTDSDEAVPNRPEWMMITNLPVLPPDLRPLVALDGGKFAVSDVNDLYRRVINRNTRLKKLMELDAPEIIIRNEKRMLQEAVDALFDNGRRANAVKGANKRPLKSLSEIIKGKQGRFRQNLLGKRVDFSGRSVIVVGPKLRMDQCGLPKKMALELFKPHLLAKLEEKGYATTVKQAKKMIENKTNEVWECLEEVVKGHPVMLNRAPTLHKLSIQAFHPVLVEGKAIQLHPLVCAAFNADFDGDQMAVHVPLSQEAIAECKVLMLSSMNILLPASGKSVTVPSQDMVLGIYYLSLEKAGAKGSHKICTGIDEVMMALESKCLDIHASIQTMVDGRKITTTAGRLIIKSILPDFVPENSWNKVLKKKDIAALVDYVYKQGGLEITASFLDRLKNLGFEYATKAGISISIADIIVPNDKQKAIDEAKKQVREIQNSYNLGLITSGERYNKIIDIWKSTNNVLSKEMMKLVEKDKEGFNSIYMMADSGARGSAAQISQLAAMRGLMTKPDGSIIETPIISNFREGLNVLEYFISTHGARKGLADTALKTANAGYLTRKLIDVAQNVKITIEDCGTHEGVEINEITADSSIIETLEERILGRVLAEDVIDPITNSVLFAEGTLMDEEKAKILGESGIKSVNIRTPITCKAKKGICAKCYGINLGEGKLVKPGEAVGIVSAQSIGEPGTQLTLRTFHSGGTASTDLQDRQVSAQKEGFIRFYNLKTYKNKEGKNIVANRRNAAILLVEPKIKTPFKGVINIENIHEDVIVSIKDKKQEVKYILRKYDLAKPNELAGVSGSIDGKLYLPYQSGMQVEENESIVEVIKEGWNVLNRIPFASEILVEDGEPVVQNIKAGEKGTLKFYILKGDGLDRVKNVKKGDIVKEKGFFVVIADENDREAKRHYIPRESKIEFNDSEKIDDANTIIASAPKKERKVIAEWDAYNNTIIAEIDGVVSFEDIEAGYSADEQIDEATGKRSLVINEYLPSGVRPTLVIAGKGDKAVRYQLEPKTVIFVHDGDKIAQADILAKTPKAAAKSKDITGGLPRVSELFEARKPKNAAVIAEIDGVVRFDKPLRSKERIIIQAEDGTSAEYLIDKSKHIQVRDGEFIHAGEKLTDGVVSSHDVLKILGEKALHYYLISEIQQVYRGQGVVISDKHIEVIVSQMLRQVKVVDSGHTKFIEGDLVSRRKFREENERIIRMGGEPAIAEPVLLGVTRAAIGSDSVISAASFQETTKVLTEASIAGKFDYLEDLKENVILGRMIPVGTGLYGEQNLKLKEQE</sequence>
<comment type="function">
    <text evidence="1">DNA-dependent RNA polymerase catalyzes the transcription of DNA into RNA using the four ribonucleoside triphosphates as substrates.</text>
</comment>
<comment type="catalytic activity">
    <reaction evidence="1">
        <text>RNA(n) + a ribonucleoside 5'-triphosphate = RNA(n+1) + diphosphate</text>
        <dbReference type="Rhea" id="RHEA:21248"/>
        <dbReference type="Rhea" id="RHEA-COMP:14527"/>
        <dbReference type="Rhea" id="RHEA-COMP:17342"/>
        <dbReference type="ChEBI" id="CHEBI:33019"/>
        <dbReference type="ChEBI" id="CHEBI:61557"/>
        <dbReference type="ChEBI" id="CHEBI:140395"/>
        <dbReference type="EC" id="2.7.7.6"/>
    </reaction>
</comment>
<comment type="cofactor">
    <cofactor evidence="1">
        <name>Mg(2+)</name>
        <dbReference type="ChEBI" id="CHEBI:18420"/>
    </cofactor>
    <text evidence="1">Binds 1 Mg(2+) ion per subunit.</text>
</comment>
<comment type="cofactor">
    <cofactor evidence="1">
        <name>Zn(2+)</name>
        <dbReference type="ChEBI" id="CHEBI:29105"/>
    </cofactor>
    <text evidence="1">Binds 2 Zn(2+) ions per subunit.</text>
</comment>
<comment type="subunit">
    <text evidence="1">The RNAP catalytic core consists of 2 alpha, 1 beta, 1 beta' and 1 omega subunit. When a sigma factor is associated with the core the holoenzyme is formed, which can initiate transcription.</text>
</comment>
<comment type="similarity">
    <text evidence="1">Belongs to the RNA polymerase beta' chain family.</text>
</comment>
<evidence type="ECO:0000255" key="1">
    <source>
        <dbReference type="HAMAP-Rule" id="MF_01322"/>
    </source>
</evidence>
<reference key="1">
    <citation type="submission" date="2006-12" db="EMBL/GenBank/DDBJ databases">
        <authorList>
            <person name="Fouts D.E."/>
            <person name="Nelson K.E."/>
            <person name="Sebastian Y."/>
        </authorList>
    </citation>
    <scope>NUCLEOTIDE SEQUENCE [LARGE SCALE GENOMIC DNA]</scope>
    <source>
        <strain>81-176</strain>
    </source>
</reference>
<feature type="chain" id="PRO_0000308825" description="DNA-directed RNA polymerase subunit beta'">
    <location>
        <begin position="1"/>
        <end position="1517"/>
    </location>
</feature>
<feature type="binding site" evidence="1">
    <location>
        <position position="71"/>
    </location>
    <ligand>
        <name>Zn(2+)</name>
        <dbReference type="ChEBI" id="CHEBI:29105"/>
        <label>1</label>
    </ligand>
</feature>
<feature type="binding site" evidence="1">
    <location>
        <position position="73"/>
    </location>
    <ligand>
        <name>Zn(2+)</name>
        <dbReference type="ChEBI" id="CHEBI:29105"/>
        <label>1</label>
    </ligand>
</feature>
<feature type="binding site" evidence="1">
    <location>
        <position position="86"/>
    </location>
    <ligand>
        <name>Zn(2+)</name>
        <dbReference type="ChEBI" id="CHEBI:29105"/>
        <label>1</label>
    </ligand>
</feature>
<feature type="binding site" evidence="1">
    <location>
        <position position="89"/>
    </location>
    <ligand>
        <name>Zn(2+)</name>
        <dbReference type="ChEBI" id="CHEBI:29105"/>
        <label>1</label>
    </ligand>
</feature>
<feature type="binding site" evidence="1">
    <location>
        <position position="482"/>
    </location>
    <ligand>
        <name>Mg(2+)</name>
        <dbReference type="ChEBI" id="CHEBI:18420"/>
    </ligand>
</feature>
<feature type="binding site" evidence="1">
    <location>
        <position position="484"/>
    </location>
    <ligand>
        <name>Mg(2+)</name>
        <dbReference type="ChEBI" id="CHEBI:18420"/>
    </ligand>
</feature>
<feature type="binding site" evidence="1">
    <location>
        <position position="486"/>
    </location>
    <ligand>
        <name>Mg(2+)</name>
        <dbReference type="ChEBI" id="CHEBI:18420"/>
    </ligand>
</feature>
<feature type="binding site" evidence="1">
    <location>
        <position position="812"/>
    </location>
    <ligand>
        <name>Zn(2+)</name>
        <dbReference type="ChEBI" id="CHEBI:29105"/>
        <label>2</label>
    </ligand>
</feature>
<feature type="binding site" evidence="1">
    <location>
        <position position="886"/>
    </location>
    <ligand>
        <name>Zn(2+)</name>
        <dbReference type="ChEBI" id="CHEBI:29105"/>
        <label>2</label>
    </ligand>
</feature>
<feature type="binding site" evidence="1">
    <location>
        <position position="893"/>
    </location>
    <ligand>
        <name>Zn(2+)</name>
        <dbReference type="ChEBI" id="CHEBI:29105"/>
        <label>2</label>
    </ligand>
</feature>
<feature type="binding site" evidence="1">
    <location>
        <position position="896"/>
    </location>
    <ligand>
        <name>Zn(2+)</name>
        <dbReference type="ChEBI" id="CHEBI:29105"/>
        <label>2</label>
    </ligand>
</feature>
<organism>
    <name type="scientific">Campylobacter jejuni subsp. jejuni serotype O:23/36 (strain 81-176)</name>
    <dbReference type="NCBI Taxonomy" id="354242"/>
    <lineage>
        <taxon>Bacteria</taxon>
        <taxon>Pseudomonadati</taxon>
        <taxon>Campylobacterota</taxon>
        <taxon>Epsilonproteobacteria</taxon>
        <taxon>Campylobacterales</taxon>
        <taxon>Campylobacteraceae</taxon>
        <taxon>Campylobacter</taxon>
    </lineage>
</organism>
<proteinExistence type="inferred from homology"/>
<accession>A1VYJ5</accession>
<gene>
    <name evidence="1" type="primary">rpoC</name>
    <name type="ordered locus">CJJ81176_0510</name>
</gene>
<dbReference type="EC" id="2.7.7.6" evidence="1"/>
<dbReference type="EMBL" id="CP000538">
    <property type="protein sequence ID" value="EAQ73134.1"/>
    <property type="molecule type" value="Genomic_DNA"/>
</dbReference>
<dbReference type="RefSeq" id="WP_002857527.1">
    <property type="nucleotide sequence ID" value="NC_008787.1"/>
</dbReference>
<dbReference type="SMR" id="A1VYJ5"/>
<dbReference type="KEGG" id="cjj:CJJ81176_0510"/>
<dbReference type="eggNOG" id="COG0086">
    <property type="taxonomic scope" value="Bacteria"/>
</dbReference>
<dbReference type="HOGENOM" id="CLU_000524_3_1_7"/>
<dbReference type="Proteomes" id="UP000000646">
    <property type="component" value="Chromosome"/>
</dbReference>
<dbReference type="GO" id="GO:0000428">
    <property type="term" value="C:DNA-directed RNA polymerase complex"/>
    <property type="evidence" value="ECO:0007669"/>
    <property type="project" value="UniProtKB-KW"/>
</dbReference>
<dbReference type="GO" id="GO:0003677">
    <property type="term" value="F:DNA binding"/>
    <property type="evidence" value="ECO:0007669"/>
    <property type="project" value="UniProtKB-UniRule"/>
</dbReference>
<dbReference type="GO" id="GO:0003899">
    <property type="term" value="F:DNA-directed RNA polymerase activity"/>
    <property type="evidence" value="ECO:0007669"/>
    <property type="project" value="UniProtKB-UniRule"/>
</dbReference>
<dbReference type="GO" id="GO:0000287">
    <property type="term" value="F:magnesium ion binding"/>
    <property type="evidence" value="ECO:0007669"/>
    <property type="project" value="UniProtKB-UniRule"/>
</dbReference>
<dbReference type="GO" id="GO:0008270">
    <property type="term" value="F:zinc ion binding"/>
    <property type="evidence" value="ECO:0007669"/>
    <property type="project" value="UniProtKB-UniRule"/>
</dbReference>
<dbReference type="GO" id="GO:0006351">
    <property type="term" value="P:DNA-templated transcription"/>
    <property type="evidence" value="ECO:0007669"/>
    <property type="project" value="UniProtKB-UniRule"/>
</dbReference>
<dbReference type="CDD" id="cd02655">
    <property type="entry name" value="RNAP_beta'_C"/>
    <property type="match status" value="1"/>
</dbReference>
<dbReference type="CDD" id="cd01609">
    <property type="entry name" value="RNAP_beta'_N"/>
    <property type="match status" value="1"/>
</dbReference>
<dbReference type="FunFam" id="1.10.132.30:FF:000003">
    <property type="entry name" value="DNA-directed RNA polymerase subunit beta"/>
    <property type="match status" value="1"/>
</dbReference>
<dbReference type="Gene3D" id="1.10.132.30">
    <property type="match status" value="1"/>
</dbReference>
<dbReference type="Gene3D" id="1.10.150.390">
    <property type="match status" value="1"/>
</dbReference>
<dbReference type="Gene3D" id="1.10.1790.20">
    <property type="match status" value="1"/>
</dbReference>
<dbReference type="Gene3D" id="1.10.40.90">
    <property type="match status" value="1"/>
</dbReference>
<dbReference type="Gene3D" id="2.40.40.20">
    <property type="match status" value="1"/>
</dbReference>
<dbReference type="Gene3D" id="2.40.50.100">
    <property type="match status" value="3"/>
</dbReference>
<dbReference type="Gene3D" id="4.10.860.120">
    <property type="entry name" value="RNA polymerase II, clamp domain"/>
    <property type="match status" value="1"/>
</dbReference>
<dbReference type="Gene3D" id="1.10.274.100">
    <property type="entry name" value="RNA polymerase Rpb1, domain 3"/>
    <property type="match status" value="1"/>
</dbReference>
<dbReference type="HAMAP" id="MF_01322">
    <property type="entry name" value="RNApol_bact_RpoC"/>
    <property type="match status" value="1"/>
</dbReference>
<dbReference type="InterPro" id="IPR045867">
    <property type="entry name" value="DNA-dir_RpoC_beta_prime"/>
</dbReference>
<dbReference type="InterPro" id="IPR012754">
    <property type="entry name" value="DNA-dir_RpoC_beta_prime_bact"/>
</dbReference>
<dbReference type="InterPro" id="IPR000722">
    <property type="entry name" value="RNA_pol_asu"/>
</dbReference>
<dbReference type="InterPro" id="IPR006592">
    <property type="entry name" value="RNA_pol_N"/>
</dbReference>
<dbReference type="InterPro" id="IPR007080">
    <property type="entry name" value="RNA_pol_Rpb1_1"/>
</dbReference>
<dbReference type="InterPro" id="IPR007066">
    <property type="entry name" value="RNA_pol_Rpb1_3"/>
</dbReference>
<dbReference type="InterPro" id="IPR042102">
    <property type="entry name" value="RNA_pol_Rpb1_3_sf"/>
</dbReference>
<dbReference type="InterPro" id="IPR007083">
    <property type="entry name" value="RNA_pol_Rpb1_4"/>
</dbReference>
<dbReference type="InterPro" id="IPR007081">
    <property type="entry name" value="RNA_pol_Rpb1_5"/>
</dbReference>
<dbReference type="InterPro" id="IPR044893">
    <property type="entry name" value="RNA_pol_Rpb1_clamp_domain"/>
</dbReference>
<dbReference type="InterPro" id="IPR038120">
    <property type="entry name" value="Rpb1_funnel_sf"/>
</dbReference>
<dbReference type="NCBIfam" id="TIGR02386">
    <property type="entry name" value="rpoC_TIGR"/>
    <property type="match status" value="1"/>
</dbReference>
<dbReference type="PANTHER" id="PTHR19376">
    <property type="entry name" value="DNA-DIRECTED RNA POLYMERASE"/>
    <property type="match status" value="1"/>
</dbReference>
<dbReference type="PANTHER" id="PTHR19376:SF54">
    <property type="entry name" value="DNA-DIRECTED RNA POLYMERASE SUBUNIT BETA"/>
    <property type="match status" value="1"/>
</dbReference>
<dbReference type="Pfam" id="PF04997">
    <property type="entry name" value="RNA_pol_Rpb1_1"/>
    <property type="match status" value="1"/>
</dbReference>
<dbReference type="Pfam" id="PF00623">
    <property type="entry name" value="RNA_pol_Rpb1_2"/>
    <property type="match status" value="2"/>
</dbReference>
<dbReference type="Pfam" id="PF04983">
    <property type="entry name" value="RNA_pol_Rpb1_3"/>
    <property type="match status" value="1"/>
</dbReference>
<dbReference type="Pfam" id="PF05000">
    <property type="entry name" value="RNA_pol_Rpb1_4"/>
    <property type="match status" value="1"/>
</dbReference>
<dbReference type="Pfam" id="PF04998">
    <property type="entry name" value="RNA_pol_Rpb1_5"/>
    <property type="match status" value="1"/>
</dbReference>
<dbReference type="SMART" id="SM00663">
    <property type="entry name" value="RPOLA_N"/>
    <property type="match status" value="1"/>
</dbReference>
<dbReference type="SUPFAM" id="SSF64484">
    <property type="entry name" value="beta and beta-prime subunits of DNA dependent RNA-polymerase"/>
    <property type="match status" value="1"/>
</dbReference>
<keyword id="KW-0240">DNA-directed RNA polymerase</keyword>
<keyword id="KW-0460">Magnesium</keyword>
<keyword id="KW-0479">Metal-binding</keyword>
<keyword id="KW-0548">Nucleotidyltransferase</keyword>
<keyword id="KW-0804">Transcription</keyword>
<keyword id="KW-0808">Transferase</keyword>
<keyword id="KW-0862">Zinc</keyword>